<sequence>MKNKKDKTQKPKVIDEKFVAFFKSLNIEPQNWQFYEDAFVHSSYVNENEDARASYDRLEFLGDALIDFIVAKKLFELYPNYNEGMLTRTKIEIVKGENLNRIGKELNFGNFIKLGKGMPYTETLFGDVLEALVAAIYEDLGIEKANQFVEEHIFKKTYSEILKYNFFSLFQEQKLPEPRVRVSLTSNNLVLSIIELNGDIIWSQAVPNSKHYDDKSVLEHNAMSAFTQFLKSGKGINFFSDIKNKLDSQKPMRALTVRPKKINWKARKPKLKALKNKVKADS</sequence>
<proteinExistence type="inferred from homology"/>
<organism>
    <name type="scientific">Mycoplasmoides pneumoniae (strain ATCC 15531 / DSM 23978 / CIP 103766 / NBRC 14401 / NCTC 10119 / FH)</name>
    <name type="common">Mycoplasma pneumoniae</name>
    <dbReference type="NCBI Taxonomy" id="722438"/>
    <lineage>
        <taxon>Bacteria</taxon>
        <taxon>Bacillati</taxon>
        <taxon>Mycoplasmatota</taxon>
        <taxon>Mycoplasmoidales</taxon>
        <taxon>Mycoplasmoidaceae</taxon>
        <taxon>Mycoplasmoides</taxon>
    </lineage>
</organism>
<comment type="function">
    <text evidence="1">Digests double-stranded RNA. Involved in the processing of primary rRNA transcript to yield the immediate precursors to the large and small rRNAs (23S and 16S). Processes some mRNAs, and tRNAs when they are encoded in the rRNA operon. Processes pre-crRNA and tracrRNA of type II CRISPR loci if present in the organism.</text>
</comment>
<comment type="catalytic activity">
    <reaction evidence="1">
        <text>Endonucleolytic cleavage to 5'-phosphomonoester.</text>
        <dbReference type="EC" id="3.1.26.3"/>
    </reaction>
</comment>
<comment type="cofactor">
    <cofactor evidence="1">
        <name>Mg(2+)</name>
        <dbReference type="ChEBI" id="CHEBI:18420"/>
    </cofactor>
</comment>
<comment type="subunit">
    <text evidence="1">Homodimer.</text>
</comment>
<comment type="subcellular location">
    <subcellularLocation>
        <location evidence="1">Cytoplasm</location>
    </subcellularLocation>
</comment>
<comment type="similarity">
    <text evidence="1">Belongs to the ribonuclease III family.</text>
</comment>
<reference key="1">
    <citation type="journal article" date="2010" name="Appl. Environ. Microbiol.">
        <title>Targeted chromosomal knockouts in Mycoplasma pneumoniae.</title>
        <authorList>
            <person name="Krishnakumar R."/>
            <person name="Assad-Garcia N."/>
            <person name="Benders G.A."/>
            <person name="Phan Q."/>
            <person name="Montague M.G."/>
            <person name="Glass J.I."/>
        </authorList>
    </citation>
    <scope>NUCLEOTIDE SEQUENCE [LARGE SCALE GENOMIC DNA]</scope>
    <source>
        <strain>ATCC 15531 / DSM 23978 / CIP 103766 / NBRC 14401 / NCTC 10119 / FH</strain>
    </source>
</reference>
<keyword id="KW-0963">Cytoplasm</keyword>
<keyword id="KW-0255">Endonuclease</keyword>
<keyword id="KW-0378">Hydrolase</keyword>
<keyword id="KW-0460">Magnesium</keyword>
<keyword id="KW-0479">Metal-binding</keyword>
<keyword id="KW-0507">mRNA processing</keyword>
<keyword id="KW-0540">Nuclease</keyword>
<keyword id="KW-0698">rRNA processing</keyword>
<keyword id="KW-0819">tRNA processing</keyword>
<accession>E1QCT1</accession>
<dbReference type="EC" id="3.1.26.3" evidence="1"/>
<dbReference type="EMBL" id="CP002077">
    <property type="protein sequence ID" value="ADK87079.1"/>
    <property type="molecule type" value="Genomic_DNA"/>
</dbReference>
<dbReference type="RefSeq" id="WP_010874902.1">
    <property type="nucleotide sequence ID" value="NZ_CP010546.1"/>
</dbReference>
<dbReference type="SMR" id="E1QCT1"/>
<dbReference type="STRING" id="722438.F539_03090"/>
<dbReference type="PaxDb" id="722438-MPNE_0641"/>
<dbReference type="GeneID" id="66608773"/>
<dbReference type="KEGG" id="mpj:MPNE_0641"/>
<dbReference type="PATRIC" id="fig|722438.3.peg.619"/>
<dbReference type="eggNOG" id="COG0571">
    <property type="taxonomic scope" value="Bacteria"/>
</dbReference>
<dbReference type="HOGENOM" id="CLU_1026084_0_0_14"/>
<dbReference type="Proteomes" id="UP000007756">
    <property type="component" value="Chromosome"/>
</dbReference>
<dbReference type="GO" id="GO:0005737">
    <property type="term" value="C:cytoplasm"/>
    <property type="evidence" value="ECO:0007669"/>
    <property type="project" value="UniProtKB-SubCell"/>
</dbReference>
<dbReference type="GO" id="GO:0046872">
    <property type="term" value="F:metal ion binding"/>
    <property type="evidence" value="ECO:0007669"/>
    <property type="project" value="UniProtKB-KW"/>
</dbReference>
<dbReference type="GO" id="GO:0004525">
    <property type="term" value="F:ribonuclease III activity"/>
    <property type="evidence" value="ECO:0007669"/>
    <property type="project" value="UniProtKB-UniRule"/>
</dbReference>
<dbReference type="GO" id="GO:0003723">
    <property type="term" value="F:RNA binding"/>
    <property type="evidence" value="ECO:0007669"/>
    <property type="project" value="InterPro"/>
</dbReference>
<dbReference type="GO" id="GO:0006397">
    <property type="term" value="P:mRNA processing"/>
    <property type="evidence" value="ECO:0007669"/>
    <property type="project" value="UniProtKB-UniRule"/>
</dbReference>
<dbReference type="GO" id="GO:0006364">
    <property type="term" value="P:rRNA processing"/>
    <property type="evidence" value="ECO:0007669"/>
    <property type="project" value="UniProtKB-UniRule"/>
</dbReference>
<dbReference type="GO" id="GO:0008033">
    <property type="term" value="P:tRNA processing"/>
    <property type="evidence" value="ECO:0007669"/>
    <property type="project" value="UniProtKB-KW"/>
</dbReference>
<dbReference type="CDD" id="cd00593">
    <property type="entry name" value="RIBOc"/>
    <property type="match status" value="1"/>
</dbReference>
<dbReference type="Gene3D" id="1.10.1520.10">
    <property type="entry name" value="Ribonuclease III domain"/>
    <property type="match status" value="1"/>
</dbReference>
<dbReference type="HAMAP" id="MF_00104">
    <property type="entry name" value="RNase_III"/>
    <property type="match status" value="1"/>
</dbReference>
<dbReference type="InterPro" id="IPR011907">
    <property type="entry name" value="RNase_III"/>
</dbReference>
<dbReference type="InterPro" id="IPR000999">
    <property type="entry name" value="RNase_III_dom"/>
</dbReference>
<dbReference type="InterPro" id="IPR036389">
    <property type="entry name" value="RNase_III_sf"/>
</dbReference>
<dbReference type="NCBIfam" id="TIGR02191">
    <property type="entry name" value="RNaseIII"/>
    <property type="match status" value="1"/>
</dbReference>
<dbReference type="PANTHER" id="PTHR14950">
    <property type="entry name" value="DICER-RELATED"/>
    <property type="match status" value="1"/>
</dbReference>
<dbReference type="PANTHER" id="PTHR14950:SF37">
    <property type="entry name" value="ENDORIBONUCLEASE DICER"/>
    <property type="match status" value="1"/>
</dbReference>
<dbReference type="Pfam" id="PF14622">
    <property type="entry name" value="Ribonucleas_3_3"/>
    <property type="match status" value="1"/>
</dbReference>
<dbReference type="SMART" id="SM00535">
    <property type="entry name" value="RIBOc"/>
    <property type="match status" value="1"/>
</dbReference>
<dbReference type="SUPFAM" id="SSF69065">
    <property type="entry name" value="RNase III domain-like"/>
    <property type="match status" value="1"/>
</dbReference>
<dbReference type="PROSITE" id="PS00517">
    <property type="entry name" value="RNASE_3_1"/>
    <property type="match status" value="1"/>
</dbReference>
<dbReference type="PROSITE" id="PS50142">
    <property type="entry name" value="RNASE_3_2"/>
    <property type="match status" value="1"/>
</dbReference>
<feature type="chain" id="PRO_0000416609" description="Ribonuclease 3">
    <location>
        <begin position="1"/>
        <end position="282"/>
    </location>
</feature>
<feature type="domain" description="RNase III" evidence="1">
    <location>
        <begin position="18"/>
        <end position="141"/>
    </location>
</feature>
<feature type="active site" evidence="1">
    <location>
        <position position="63"/>
    </location>
</feature>
<feature type="active site" evidence="1">
    <location>
        <position position="130"/>
    </location>
</feature>
<feature type="binding site" evidence="1">
    <location>
        <position position="59"/>
    </location>
    <ligand>
        <name>Mg(2+)</name>
        <dbReference type="ChEBI" id="CHEBI:18420"/>
    </ligand>
</feature>
<feature type="binding site" evidence="1">
    <location>
        <position position="127"/>
    </location>
    <ligand>
        <name>Mg(2+)</name>
        <dbReference type="ChEBI" id="CHEBI:18420"/>
    </ligand>
</feature>
<feature type="binding site" evidence="1">
    <location>
        <position position="130"/>
    </location>
    <ligand>
        <name>Mg(2+)</name>
        <dbReference type="ChEBI" id="CHEBI:18420"/>
    </ligand>
</feature>
<protein>
    <recommendedName>
        <fullName evidence="1">Ribonuclease 3</fullName>
        <ecNumber evidence="1">3.1.26.3</ecNumber>
    </recommendedName>
    <alternativeName>
        <fullName evidence="1">Ribonuclease III</fullName>
        <shortName evidence="1">RNase III</shortName>
    </alternativeName>
</protein>
<name>RNC_MYCPB</name>
<gene>
    <name evidence="1" type="primary">rnc</name>
    <name type="ordered locus">MPNE_0641</name>
</gene>
<evidence type="ECO:0000255" key="1">
    <source>
        <dbReference type="HAMAP-Rule" id="MF_00104"/>
    </source>
</evidence>